<gene>
    <name evidence="1" type="primary">rplS</name>
    <name type="ordered locus">NMB0589</name>
</gene>
<organism>
    <name type="scientific">Neisseria meningitidis serogroup B (strain ATCC BAA-335 / MC58)</name>
    <dbReference type="NCBI Taxonomy" id="122586"/>
    <lineage>
        <taxon>Bacteria</taxon>
        <taxon>Pseudomonadati</taxon>
        <taxon>Pseudomonadota</taxon>
        <taxon>Betaproteobacteria</taxon>
        <taxon>Neisseriales</taxon>
        <taxon>Neisseriaceae</taxon>
        <taxon>Neisseria</taxon>
    </lineage>
</organism>
<dbReference type="EMBL" id="AE002098">
    <property type="protein sequence ID" value="AAF41017.1"/>
    <property type="molecule type" value="Genomic_DNA"/>
</dbReference>
<dbReference type="PIR" id="B81180">
    <property type="entry name" value="B81180"/>
</dbReference>
<dbReference type="RefSeq" id="NP_273633.1">
    <property type="nucleotide sequence ID" value="NC_003112.2"/>
</dbReference>
<dbReference type="RefSeq" id="WP_002217809.1">
    <property type="nucleotide sequence ID" value="NC_003112.2"/>
</dbReference>
<dbReference type="SMR" id="Q9K0K5"/>
<dbReference type="FunCoup" id="Q9K0K5">
    <property type="interactions" value="629"/>
</dbReference>
<dbReference type="STRING" id="122586.NMB0589"/>
<dbReference type="PaxDb" id="122586-NMB0589"/>
<dbReference type="GeneID" id="86929750"/>
<dbReference type="KEGG" id="nme:NMB0589"/>
<dbReference type="PATRIC" id="fig|122586.8.peg.751"/>
<dbReference type="HOGENOM" id="CLU_103507_2_1_4"/>
<dbReference type="InParanoid" id="Q9K0K5"/>
<dbReference type="OrthoDB" id="9803541at2"/>
<dbReference type="Proteomes" id="UP000000425">
    <property type="component" value="Chromosome"/>
</dbReference>
<dbReference type="GO" id="GO:0022625">
    <property type="term" value="C:cytosolic large ribosomal subunit"/>
    <property type="evidence" value="ECO:0000318"/>
    <property type="project" value="GO_Central"/>
</dbReference>
<dbReference type="GO" id="GO:0003735">
    <property type="term" value="F:structural constituent of ribosome"/>
    <property type="evidence" value="ECO:0000318"/>
    <property type="project" value="GO_Central"/>
</dbReference>
<dbReference type="GO" id="GO:0006412">
    <property type="term" value="P:translation"/>
    <property type="evidence" value="ECO:0007669"/>
    <property type="project" value="UniProtKB-UniRule"/>
</dbReference>
<dbReference type="FunFam" id="2.30.30.790:FF:000001">
    <property type="entry name" value="50S ribosomal protein L19"/>
    <property type="match status" value="1"/>
</dbReference>
<dbReference type="Gene3D" id="2.30.30.790">
    <property type="match status" value="1"/>
</dbReference>
<dbReference type="HAMAP" id="MF_00402">
    <property type="entry name" value="Ribosomal_bL19"/>
    <property type="match status" value="1"/>
</dbReference>
<dbReference type="InterPro" id="IPR001857">
    <property type="entry name" value="Ribosomal_bL19"/>
</dbReference>
<dbReference type="InterPro" id="IPR018257">
    <property type="entry name" value="Ribosomal_bL19_CS"/>
</dbReference>
<dbReference type="InterPro" id="IPR038657">
    <property type="entry name" value="Ribosomal_bL19_sf"/>
</dbReference>
<dbReference type="InterPro" id="IPR008991">
    <property type="entry name" value="Translation_prot_SH3-like_sf"/>
</dbReference>
<dbReference type="NCBIfam" id="TIGR01024">
    <property type="entry name" value="rplS_bact"/>
    <property type="match status" value="1"/>
</dbReference>
<dbReference type="PANTHER" id="PTHR15680:SF9">
    <property type="entry name" value="LARGE RIBOSOMAL SUBUNIT PROTEIN BL19M"/>
    <property type="match status" value="1"/>
</dbReference>
<dbReference type="PANTHER" id="PTHR15680">
    <property type="entry name" value="RIBOSOMAL PROTEIN L19"/>
    <property type="match status" value="1"/>
</dbReference>
<dbReference type="Pfam" id="PF01245">
    <property type="entry name" value="Ribosomal_L19"/>
    <property type="match status" value="1"/>
</dbReference>
<dbReference type="PIRSF" id="PIRSF002191">
    <property type="entry name" value="Ribosomal_L19"/>
    <property type="match status" value="1"/>
</dbReference>
<dbReference type="PRINTS" id="PR00061">
    <property type="entry name" value="RIBOSOMALL19"/>
</dbReference>
<dbReference type="SUPFAM" id="SSF50104">
    <property type="entry name" value="Translation proteins SH3-like domain"/>
    <property type="match status" value="1"/>
</dbReference>
<dbReference type="PROSITE" id="PS01015">
    <property type="entry name" value="RIBOSOMAL_L19"/>
    <property type="match status" value="1"/>
</dbReference>
<proteinExistence type="evidence at protein level"/>
<protein>
    <recommendedName>
        <fullName evidence="1">Large ribosomal subunit protein bL19</fullName>
    </recommendedName>
    <alternativeName>
        <fullName evidence="2">50S ribosomal protein L19</fullName>
    </alternativeName>
</protein>
<sequence>MNLIQQLEQEEIARLNKEIPEFAPGDTVVVSVRVVEGTRSRLQAYEGVVIARRNRGLNSNFIVRKISSGEGVERTFQLYSPTVEKIEVKRRGDVRRAKLYYLRGLTGKAARIKEKLPARKG</sequence>
<feature type="chain" id="PRO_0000163496" description="Large ribosomal subunit protein bL19">
    <location>
        <begin position="1"/>
        <end position="121"/>
    </location>
</feature>
<keyword id="KW-1185">Reference proteome</keyword>
<keyword id="KW-0687">Ribonucleoprotein</keyword>
<keyword id="KW-0689">Ribosomal protein</keyword>
<name>RL19_NEIMB</name>
<accession>Q9K0K5</accession>
<reference key="1">
    <citation type="journal article" date="2000" name="Science">
        <title>Complete genome sequence of Neisseria meningitidis serogroup B strain MC58.</title>
        <authorList>
            <person name="Tettelin H."/>
            <person name="Saunders N.J."/>
            <person name="Heidelberg J.F."/>
            <person name="Jeffries A.C."/>
            <person name="Nelson K.E."/>
            <person name="Eisen J.A."/>
            <person name="Ketchum K.A."/>
            <person name="Hood D.W."/>
            <person name="Peden J.F."/>
            <person name="Dodson R.J."/>
            <person name="Nelson W.C."/>
            <person name="Gwinn M.L."/>
            <person name="DeBoy R.T."/>
            <person name="Peterson J.D."/>
            <person name="Hickey E.K."/>
            <person name="Haft D.H."/>
            <person name="Salzberg S.L."/>
            <person name="White O."/>
            <person name="Fleischmann R.D."/>
            <person name="Dougherty B.A."/>
            <person name="Mason T.M."/>
            <person name="Ciecko A."/>
            <person name="Parksey D.S."/>
            <person name="Blair E."/>
            <person name="Cittone H."/>
            <person name="Clark E.B."/>
            <person name="Cotton M.D."/>
            <person name="Utterback T.R."/>
            <person name="Khouri H.M."/>
            <person name="Qin H."/>
            <person name="Vamathevan J.J."/>
            <person name="Gill J."/>
            <person name="Scarlato V."/>
            <person name="Masignani V."/>
            <person name="Pizza M."/>
            <person name="Grandi G."/>
            <person name="Sun L."/>
            <person name="Smith H.O."/>
            <person name="Fraser C.M."/>
            <person name="Moxon E.R."/>
            <person name="Rappuoli R."/>
            <person name="Venter J.C."/>
        </authorList>
    </citation>
    <scope>NUCLEOTIDE SEQUENCE [LARGE SCALE GENOMIC DNA]</scope>
    <source>
        <strain>ATCC BAA-335 / MC58</strain>
    </source>
</reference>
<reference key="2">
    <citation type="journal article" date="2005" name="Hum. Vaccin.">
        <title>Characterization of the protein content of a meningococcal outer membrane vesicle vaccine by polyacrylamide gel electrophoresis and mass spectrometry.</title>
        <authorList>
            <person name="Vipond C."/>
            <person name="Wheeler J.X."/>
            <person name="Jones C."/>
            <person name="Feavers I.M."/>
            <person name="Suker J."/>
        </authorList>
    </citation>
    <scope>IDENTIFICATION BY MASS SPECTROMETRY [LARGE SCALE ANALYSIS]</scope>
</reference>
<comment type="function">
    <text evidence="1">This protein is located at the 30S-50S ribosomal subunit interface and may play a role in the structure and function of the aminoacyl-tRNA binding site.</text>
</comment>
<comment type="miscellaneous">
    <text>Present in outer membrane vesicle formulations which are used as vaccines in human.</text>
</comment>
<comment type="similarity">
    <text evidence="1">Belongs to the bacterial ribosomal protein bL19 family.</text>
</comment>
<evidence type="ECO:0000255" key="1">
    <source>
        <dbReference type="HAMAP-Rule" id="MF_00402"/>
    </source>
</evidence>
<evidence type="ECO:0000305" key="2"/>